<name>RS14_STRPC</name>
<proteinExistence type="inferred from homology"/>
<protein>
    <recommendedName>
        <fullName evidence="1">Small ribosomal subunit protein uS14A</fullName>
    </recommendedName>
    <alternativeName>
        <fullName evidence="3">30S ribosomal protein S14</fullName>
    </alternativeName>
</protein>
<evidence type="ECO:0000255" key="1">
    <source>
        <dbReference type="HAMAP-Rule" id="MF_00537"/>
    </source>
</evidence>
<evidence type="ECO:0000256" key="2">
    <source>
        <dbReference type="SAM" id="MobiDB-lite"/>
    </source>
</evidence>
<evidence type="ECO:0000305" key="3"/>
<feature type="chain" id="PRO_0000269070" description="Small ribosomal subunit protein uS14A">
    <location>
        <begin position="1"/>
        <end position="89"/>
    </location>
</feature>
<feature type="region of interest" description="Disordered" evidence="2">
    <location>
        <begin position="34"/>
        <end position="54"/>
    </location>
</feature>
<organism>
    <name type="scientific">Streptococcus pyogenes serotype M12 (strain MGAS9429)</name>
    <dbReference type="NCBI Taxonomy" id="370551"/>
    <lineage>
        <taxon>Bacteria</taxon>
        <taxon>Bacillati</taxon>
        <taxon>Bacillota</taxon>
        <taxon>Bacilli</taxon>
        <taxon>Lactobacillales</taxon>
        <taxon>Streptococcaceae</taxon>
        <taxon>Streptococcus</taxon>
    </lineage>
</organism>
<sequence>MAKKSKIAKYQKQLQLIEQYADLRRDLKAKGDYESLRKLPRDSNPNRLKNRDKIDGRPHAYMRKFGVSRINFRDLAHKGQLPGVTKASW</sequence>
<keyword id="KW-0687">Ribonucleoprotein</keyword>
<keyword id="KW-0689">Ribosomal protein</keyword>
<keyword id="KW-0694">RNA-binding</keyword>
<keyword id="KW-0699">rRNA-binding</keyword>
<comment type="function">
    <text evidence="1">Binds 16S rRNA, required for the assembly of 30S particles and may also be responsible for determining the conformation of the 16S rRNA at the A site.</text>
</comment>
<comment type="subunit">
    <text evidence="1">Part of the 30S ribosomal subunit. Contacts proteins S3 and S10.</text>
</comment>
<comment type="similarity">
    <text evidence="1">Belongs to the universal ribosomal protein uS14 family.</text>
</comment>
<dbReference type="EMBL" id="CP000259">
    <property type="protein sequence ID" value="ABF32782.1"/>
    <property type="molecule type" value="Genomic_DNA"/>
</dbReference>
<dbReference type="RefSeq" id="WP_002982921.1">
    <property type="nucleotide sequence ID" value="NC_008021.1"/>
</dbReference>
<dbReference type="SMR" id="Q1JK41"/>
<dbReference type="GeneID" id="69900252"/>
<dbReference type="KEGG" id="spk:MGAS9429_Spy1595"/>
<dbReference type="HOGENOM" id="CLU_139869_0_0_9"/>
<dbReference type="Proteomes" id="UP000002433">
    <property type="component" value="Chromosome"/>
</dbReference>
<dbReference type="GO" id="GO:0005737">
    <property type="term" value="C:cytoplasm"/>
    <property type="evidence" value="ECO:0007669"/>
    <property type="project" value="UniProtKB-ARBA"/>
</dbReference>
<dbReference type="GO" id="GO:0015935">
    <property type="term" value="C:small ribosomal subunit"/>
    <property type="evidence" value="ECO:0007669"/>
    <property type="project" value="TreeGrafter"/>
</dbReference>
<dbReference type="GO" id="GO:0019843">
    <property type="term" value="F:rRNA binding"/>
    <property type="evidence" value="ECO:0007669"/>
    <property type="project" value="UniProtKB-UniRule"/>
</dbReference>
<dbReference type="GO" id="GO:0003735">
    <property type="term" value="F:structural constituent of ribosome"/>
    <property type="evidence" value="ECO:0007669"/>
    <property type="project" value="InterPro"/>
</dbReference>
<dbReference type="GO" id="GO:0006412">
    <property type="term" value="P:translation"/>
    <property type="evidence" value="ECO:0007669"/>
    <property type="project" value="UniProtKB-UniRule"/>
</dbReference>
<dbReference type="Gene3D" id="4.10.830.10">
    <property type="entry name" value="30s Ribosomal Protein S14, Chain N"/>
    <property type="match status" value="1"/>
</dbReference>
<dbReference type="HAMAP" id="MF_00537">
    <property type="entry name" value="Ribosomal_uS14_1"/>
    <property type="match status" value="1"/>
</dbReference>
<dbReference type="InterPro" id="IPR001209">
    <property type="entry name" value="Ribosomal_uS14"/>
</dbReference>
<dbReference type="InterPro" id="IPR023036">
    <property type="entry name" value="Ribosomal_uS14_bac/plastid"/>
</dbReference>
<dbReference type="InterPro" id="IPR043140">
    <property type="entry name" value="Ribosomal_uS14_sf"/>
</dbReference>
<dbReference type="NCBIfam" id="NF006477">
    <property type="entry name" value="PRK08881.1"/>
    <property type="match status" value="1"/>
</dbReference>
<dbReference type="PANTHER" id="PTHR19836">
    <property type="entry name" value="30S RIBOSOMAL PROTEIN S14"/>
    <property type="match status" value="1"/>
</dbReference>
<dbReference type="PANTHER" id="PTHR19836:SF19">
    <property type="entry name" value="SMALL RIBOSOMAL SUBUNIT PROTEIN US14M"/>
    <property type="match status" value="1"/>
</dbReference>
<dbReference type="Pfam" id="PF00253">
    <property type="entry name" value="Ribosomal_S14"/>
    <property type="match status" value="1"/>
</dbReference>
<dbReference type="SUPFAM" id="SSF57716">
    <property type="entry name" value="Glucocorticoid receptor-like (DNA-binding domain)"/>
    <property type="match status" value="1"/>
</dbReference>
<gene>
    <name evidence="1" type="primary">rpsN</name>
    <name type="synonym">rpsN2</name>
    <name type="ordered locus">MGAS9429_Spy1595</name>
</gene>
<reference key="1">
    <citation type="journal article" date="2006" name="Proc. Natl. Acad. Sci. U.S.A.">
        <title>Molecular genetic anatomy of inter- and intraserotype variation in the human bacterial pathogen group A Streptococcus.</title>
        <authorList>
            <person name="Beres S.B."/>
            <person name="Richter E.W."/>
            <person name="Nagiec M.J."/>
            <person name="Sumby P."/>
            <person name="Porcella S.F."/>
            <person name="DeLeo F.R."/>
            <person name="Musser J.M."/>
        </authorList>
    </citation>
    <scope>NUCLEOTIDE SEQUENCE [LARGE SCALE GENOMIC DNA]</scope>
    <source>
        <strain>MGAS9429</strain>
    </source>
</reference>
<accession>Q1JK41</accession>